<proteinExistence type="evidence at protein level"/>
<name>AHL10_ARATH</name>
<dbReference type="EMBL" id="AJ222585">
    <property type="protein sequence ID" value="CAA10857.1"/>
    <property type="molecule type" value="mRNA"/>
</dbReference>
<dbReference type="EMBL" id="AC002332">
    <property type="protein sequence ID" value="AAB80677.2"/>
    <property type="molecule type" value="Genomic_DNA"/>
</dbReference>
<dbReference type="EMBL" id="CP002685">
    <property type="protein sequence ID" value="AEC08860.1"/>
    <property type="molecule type" value="Genomic_DNA"/>
</dbReference>
<dbReference type="EMBL" id="CP002685">
    <property type="protein sequence ID" value="AEC08861.1"/>
    <property type="molecule type" value="Genomic_DNA"/>
</dbReference>
<dbReference type="EMBL" id="CP002685">
    <property type="protein sequence ID" value="AEC08862.1"/>
    <property type="molecule type" value="Genomic_DNA"/>
</dbReference>
<dbReference type="EMBL" id="CP002685">
    <property type="protein sequence ID" value="AEC08863.1"/>
    <property type="molecule type" value="Genomic_DNA"/>
</dbReference>
<dbReference type="EMBL" id="AF385705">
    <property type="protein sequence ID" value="AAK60297.1"/>
    <property type="molecule type" value="mRNA"/>
</dbReference>
<dbReference type="EMBL" id="AY081729">
    <property type="protein sequence ID" value="AAL87382.1"/>
    <property type="molecule type" value="mRNA"/>
</dbReference>
<dbReference type="EMBL" id="BR000346">
    <property type="protein sequence ID" value="FAA00281.1"/>
    <property type="molecule type" value="mRNA"/>
</dbReference>
<dbReference type="PIR" id="G84747">
    <property type="entry name" value="G84747"/>
</dbReference>
<dbReference type="RefSeq" id="NP_001118437.1">
    <property type="nucleotide sequence ID" value="NM_001124965.1"/>
</dbReference>
<dbReference type="RefSeq" id="NP_565769.1">
    <property type="nucleotide sequence ID" value="NM_128922.3"/>
</dbReference>
<dbReference type="RefSeq" id="NP_850215.1">
    <property type="nucleotide sequence ID" value="NM_179884.4"/>
</dbReference>
<dbReference type="RefSeq" id="NP_973590.1">
    <property type="nucleotide sequence ID" value="NM_201861.3"/>
</dbReference>
<dbReference type="SMR" id="O22812"/>
<dbReference type="FunCoup" id="O22812">
    <property type="interactions" value="662"/>
</dbReference>
<dbReference type="STRING" id="3702.O22812"/>
<dbReference type="GlyGen" id="O22812">
    <property type="glycosylation" value="1 site, 1 O-linked glycan (1 site)"/>
</dbReference>
<dbReference type="iPTMnet" id="O22812"/>
<dbReference type="PaxDb" id="3702-AT2G33620.2"/>
<dbReference type="ProteomicsDB" id="245033"/>
<dbReference type="EnsemblPlants" id="AT2G33620.1">
    <property type="protein sequence ID" value="AT2G33620.1"/>
    <property type="gene ID" value="AT2G33620"/>
</dbReference>
<dbReference type="EnsemblPlants" id="AT2G33620.2">
    <property type="protein sequence ID" value="AT2G33620.2"/>
    <property type="gene ID" value="AT2G33620"/>
</dbReference>
<dbReference type="EnsemblPlants" id="AT2G33620.3">
    <property type="protein sequence ID" value="AT2G33620.3"/>
    <property type="gene ID" value="AT2G33620"/>
</dbReference>
<dbReference type="EnsemblPlants" id="AT2G33620.4">
    <property type="protein sequence ID" value="AT2G33620.4"/>
    <property type="gene ID" value="AT2G33620"/>
</dbReference>
<dbReference type="GeneID" id="817928"/>
<dbReference type="Gramene" id="AT2G33620.1">
    <property type="protein sequence ID" value="AT2G33620.1"/>
    <property type="gene ID" value="AT2G33620"/>
</dbReference>
<dbReference type="Gramene" id="AT2G33620.2">
    <property type="protein sequence ID" value="AT2G33620.2"/>
    <property type="gene ID" value="AT2G33620"/>
</dbReference>
<dbReference type="Gramene" id="AT2G33620.3">
    <property type="protein sequence ID" value="AT2G33620.3"/>
    <property type="gene ID" value="AT2G33620"/>
</dbReference>
<dbReference type="Gramene" id="AT2G33620.4">
    <property type="protein sequence ID" value="AT2G33620.4"/>
    <property type="gene ID" value="AT2G33620"/>
</dbReference>
<dbReference type="KEGG" id="ath:AT2G33620"/>
<dbReference type="Araport" id="AT2G33620"/>
<dbReference type="TAIR" id="AT2G33620">
    <property type="gene designation" value="AHL10"/>
</dbReference>
<dbReference type="eggNOG" id="ENOG502QSB3">
    <property type="taxonomic scope" value="Eukaryota"/>
</dbReference>
<dbReference type="HOGENOM" id="CLU_039808_7_0_1"/>
<dbReference type="InParanoid" id="O22812"/>
<dbReference type="OMA" id="MNMGSEP"/>
<dbReference type="OrthoDB" id="1750003at2759"/>
<dbReference type="PhylomeDB" id="O22812"/>
<dbReference type="CD-CODE" id="4299E36E">
    <property type="entry name" value="Nucleolus"/>
</dbReference>
<dbReference type="PRO" id="PR:O22812"/>
<dbReference type="Proteomes" id="UP000006548">
    <property type="component" value="Chromosome 2"/>
</dbReference>
<dbReference type="ExpressionAtlas" id="O22812">
    <property type="expression patterns" value="baseline and differential"/>
</dbReference>
<dbReference type="GO" id="GO:0005634">
    <property type="term" value="C:nucleus"/>
    <property type="evidence" value="ECO:0007669"/>
    <property type="project" value="UniProtKB-SubCell"/>
</dbReference>
<dbReference type="GO" id="GO:0003680">
    <property type="term" value="F:minor groove of adenine-thymine-rich DNA binding"/>
    <property type="evidence" value="ECO:0007669"/>
    <property type="project" value="InterPro"/>
</dbReference>
<dbReference type="CDD" id="cd11378">
    <property type="entry name" value="DUF296"/>
    <property type="match status" value="1"/>
</dbReference>
<dbReference type="FunFam" id="3.30.1330.80:FF:000003">
    <property type="entry name" value="AT-hook motif nuclear-localized protein 1-like"/>
    <property type="match status" value="1"/>
</dbReference>
<dbReference type="Gene3D" id="3.30.1330.80">
    <property type="entry name" value="Hypothetical protein, similar to alpha- acetolactate decarboxylase, domain 2"/>
    <property type="match status" value="1"/>
</dbReference>
<dbReference type="InterPro" id="IPR039605">
    <property type="entry name" value="AHL"/>
</dbReference>
<dbReference type="InterPro" id="IPR017956">
    <property type="entry name" value="AT_hook_DNA-bd_motif"/>
</dbReference>
<dbReference type="InterPro" id="IPR005175">
    <property type="entry name" value="PPC_dom"/>
</dbReference>
<dbReference type="PANTHER" id="PTHR31500:SF57">
    <property type="entry name" value="AT-HOOK MOTIF NUCLEAR-LOCALIZED PROTEIN 10"/>
    <property type="match status" value="1"/>
</dbReference>
<dbReference type="PANTHER" id="PTHR31500">
    <property type="entry name" value="AT-HOOK MOTIF NUCLEAR-LOCALIZED PROTEIN 9"/>
    <property type="match status" value="1"/>
</dbReference>
<dbReference type="Pfam" id="PF03479">
    <property type="entry name" value="PCC"/>
    <property type="match status" value="1"/>
</dbReference>
<dbReference type="SMART" id="SM00384">
    <property type="entry name" value="AT_hook"/>
    <property type="match status" value="2"/>
</dbReference>
<dbReference type="SUPFAM" id="SSF117856">
    <property type="entry name" value="AF0104/ALDC/Ptd012-like"/>
    <property type="match status" value="1"/>
</dbReference>
<dbReference type="PROSITE" id="PS51742">
    <property type="entry name" value="PPC"/>
    <property type="match status" value="1"/>
</dbReference>
<sequence>MSGSETGLMAATRESMQFTMALHQQQQHSQAQPQQSQNRPLSFGGDDGTALYKQPMRSVSPPQQYQPNSAGENSVLNMNLPGGESGGMTGTGSEPVKKRRGRPRKYGPDSGEMSLGLNPGAPSFTVSQPSSGGDGGEKKRGRPPGSSSKRLKLQALGSTGIGFTPHVLTVLAGEDVSSKIMALTHNGPRAVCVLSANGAISNVTLRQSATSGGTVTYEGRFEILSLSGSFHLLENNGQRSRTGGLSVSLSSPDGNVLGGSVAGLLIAASPVQIVVGSFLPDGEKEPKQHVGQMGLSSPVLPRVAPTQVLMTPSSPQSRGTMSESSCGGGHGSPIHQSTGGPYNNTINMPWK</sequence>
<gene>
    <name evidence="6" type="primary">AHL10</name>
    <name evidence="7" type="synonym">AHP1</name>
    <name evidence="9" type="ordered locus">At2g33620</name>
    <name evidence="10" type="ORF">F4P9.39</name>
</gene>
<organism>
    <name type="scientific">Arabidopsis thaliana</name>
    <name type="common">Mouse-ear cress</name>
    <dbReference type="NCBI Taxonomy" id="3702"/>
    <lineage>
        <taxon>Eukaryota</taxon>
        <taxon>Viridiplantae</taxon>
        <taxon>Streptophyta</taxon>
        <taxon>Embryophyta</taxon>
        <taxon>Tracheophyta</taxon>
        <taxon>Spermatophyta</taxon>
        <taxon>Magnoliopsida</taxon>
        <taxon>eudicotyledons</taxon>
        <taxon>Gunneridae</taxon>
        <taxon>Pentapetalae</taxon>
        <taxon>rosids</taxon>
        <taxon>malvids</taxon>
        <taxon>Brassicales</taxon>
        <taxon>Brassicaceae</taxon>
        <taxon>Camelineae</taxon>
        <taxon>Arabidopsis</taxon>
    </lineage>
</organism>
<protein>
    <recommendedName>
        <fullName evidence="12">AT-hook motif nuclear-localized protein 10</fullName>
    </recommendedName>
    <alternativeName>
        <fullName evidence="11">AT-hook protein 1</fullName>
    </alternativeName>
</protein>
<accession>O22812</accession>
<accession>O23142</accession>
<accession>Q94F52</accession>
<feature type="chain" id="PRO_0000432028" description="AT-hook motif nuclear-localized protein 10">
    <location>
        <begin position="1"/>
        <end position="351"/>
    </location>
</feature>
<feature type="domain" description="PPC" evidence="3">
    <location>
        <begin position="159"/>
        <end position="301"/>
    </location>
</feature>
<feature type="DNA-binding region" description="A.T hook 1" evidence="2">
    <location>
        <begin position="97"/>
        <end position="109"/>
    </location>
</feature>
<feature type="DNA-binding region" description="A.T hook 2" evidence="2">
    <location>
        <begin position="138"/>
        <end position="149"/>
    </location>
</feature>
<feature type="region of interest" description="Disordered" evidence="4">
    <location>
        <begin position="1"/>
        <end position="151"/>
    </location>
</feature>
<feature type="region of interest" description="Disordered" evidence="4">
    <location>
        <begin position="310"/>
        <end position="351"/>
    </location>
</feature>
<feature type="short sequence motif" description="Bipartite nuclear localization signal" evidence="8">
    <location>
        <begin position="97"/>
        <end position="105"/>
    </location>
</feature>
<feature type="compositionally biased region" description="Low complexity" evidence="4">
    <location>
        <begin position="23"/>
        <end position="37"/>
    </location>
</feature>
<feature type="compositionally biased region" description="Polar residues" evidence="4">
    <location>
        <begin position="60"/>
        <end position="77"/>
    </location>
</feature>
<feature type="compositionally biased region" description="Polar residues" evidence="4">
    <location>
        <begin position="310"/>
        <end position="325"/>
    </location>
</feature>
<feature type="compositionally biased region" description="Polar residues" evidence="4">
    <location>
        <begin position="334"/>
        <end position="351"/>
    </location>
</feature>
<feature type="sequence conflict" description="In Ref. 1; CAA10857." evidence="8" ref="1">
    <original>Q</original>
    <variation>E</variation>
    <location>
        <position position="154"/>
    </location>
</feature>
<feature type="sequence conflict" description="In Ref. 4; AAK60297." evidence="8" ref="4">
    <original>S</original>
    <variation>P</variation>
    <location>
        <position position="208"/>
    </location>
</feature>
<reference key="1">
    <citation type="submission" date="1997-11" db="EMBL/GenBank/DDBJ databases">
        <title>Novel AT-hook containing DNA binding protein from Arabidopsis.</title>
        <authorList>
            <person name="Hofmann W.A."/>
            <person name="Saedler H."/>
            <person name="Huijser P."/>
        </authorList>
    </citation>
    <scope>NUCLEOTIDE SEQUENCE [MRNA]</scope>
    <source>
        <strain>cv. Landsberg erecta</strain>
        <tissue evidence="11">Flower bud</tissue>
    </source>
</reference>
<reference key="2">
    <citation type="journal article" date="1999" name="Nature">
        <title>Sequence and analysis of chromosome 2 of the plant Arabidopsis thaliana.</title>
        <authorList>
            <person name="Lin X."/>
            <person name="Kaul S."/>
            <person name="Rounsley S.D."/>
            <person name="Shea T.P."/>
            <person name="Benito M.-I."/>
            <person name="Town C.D."/>
            <person name="Fujii C.Y."/>
            <person name="Mason T.M."/>
            <person name="Bowman C.L."/>
            <person name="Barnstead M.E."/>
            <person name="Feldblyum T.V."/>
            <person name="Buell C.R."/>
            <person name="Ketchum K.A."/>
            <person name="Lee J.J."/>
            <person name="Ronning C.M."/>
            <person name="Koo H.L."/>
            <person name="Moffat K.S."/>
            <person name="Cronin L.A."/>
            <person name="Shen M."/>
            <person name="Pai G."/>
            <person name="Van Aken S."/>
            <person name="Umayam L."/>
            <person name="Tallon L.J."/>
            <person name="Gill J.E."/>
            <person name="Adams M.D."/>
            <person name="Carrera A.J."/>
            <person name="Creasy T.H."/>
            <person name="Goodman H.M."/>
            <person name="Somerville C.R."/>
            <person name="Copenhaver G.P."/>
            <person name="Preuss D."/>
            <person name="Nierman W.C."/>
            <person name="White O."/>
            <person name="Eisen J.A."/>
            <person name="Salzberg S.L."/>
            <person name="Fraser C.M."/>
            <person name="Venter J.C."/>
        </authorList>
    </citation>
    <scope>NUCLEOTIDE SEQUENCE [LARGE SCALE GENOMIC DNA]</scope>
    <source>
        <strain>cv. Columbia</strain>
    </source>
</reference>
<reference key="3">
    <citation type="journal article" date="2017" name="Plant J.">
        <title>Araport11: a complete reannotation of the Arabidopsis thaliana reference genome.</title>
        <authorList>
            <person name="Cheng C.Y."/>
            <person name="Krishnakumar V."/>
            <person name="Chan A.P."/>
            <person name="Thibaud-Nissen F."/>
            <person name="Schobel S."/>
            <person name="Town C.D."/>
        </authorList>
    </citation>
    <scope>GENOME REANNOTATION</scope>
    <source>
        <strain>cv. Columbia</strain>
    </source>
</reference>
<reference key="4">
    <citation type="journal article" date="2003" name="Science">
        <title>Empirical analysis of transcriptional activity in the Arabidopsis genome.</title>
        <authorList>
            <person name="Yamada K."/>
            <person name="Lim J."/>
            <person name="Dale J.M."/>
            <person name="Chen H."/>
            <person name="Shinn P."/>
            <person name="Palm C.J."/>
            <person name="Southwick A.M."/>
            <person name="Wu H.C."/>
            <person name="Kim C.J."/>
            <person name="Nguyen M."/>
            <person name="Pham P.K."/>
            <person name="Cheuk R.F."/>
            <person name="Karlin-Newmann G."/>
            <person name="Liu S.X."/>
            <person name="Lam B."/>
            <person name="Sakano H."/>
            <person name="Wu T."/>
            <person name="Yu G."/>
            <person name="Miranda M."/>
            <person name="Quach H.L."/>
            <person name="Tripp M."/>
            <person name="Chang C.H."/>
            <person name="Lee J.M."/>
            <person name="Toriumi M.J."/>
            <person name="Chan M.M."/>
            <person name="Tang C.C."/>
            <person name="Onodera C.S."/>
            <person name="Deng J.M."/>
            <person name="Akiyama K."/>
            <person name="Ansari Y."/>
            <person name="Arakawa T."/>
            <person name="Banh J."/>
            <person name="Banno F."/>
            <person name="Bowser L."/>
            <person name="Brooks S.Y."/>
            <person name="Carninci P."/>
            <person name="Chao Q."/>
            <person name="Choy N."/>
            <person name="Enju A."/>
            <person name="Goldsmith A.D."/>
            <person name="Gurjal M."/>
            <person name="Hansen N.F."/>
            <person name="Hayashizaki Y."/>
            <person name="Johnson-Hopson C."/>
            <person name="Hsuan V.W."/>
            <person name="Iida K."/>
            <person name="Karnes M."/>
            <person name="Khan S."/>
            <person name="Koesema E."/>
            <person name="Ishida J."/>
            <person name="Jiang P.X."/>
            <person name="Jones T."/>
            <person name="Kawai J."/>
            <person name="Kamiya A."/>
            <person name="Meyers C."/>
            <person name="Nakajima M."/>
            <person name="Narusaka M."/>
            <person name="Seki M."/>
            <person name="Sakurai T."/>
            <person name="Satou M."/>
            <person name="Tamse R."/>
            <person name="Vaysberg M."/>
            <person name="Wallender E.K."/>
            <person name="Wong C."/>
            <person name="Yamamura Y."/>
            <person name="Yuan S."/>
            <person name="Shinozaki K."/>
            <person name="Davis R.W."/>
            <person name="Theologis A."/>
            <person name="Ecker J.R."/>
        </authorList>
    </citation>
    <scope>NUCLEOTIDE SEQUENCE [LARGE SCALE MRNA]</scope>
    <source>
        <strain>cv. Columbia</strain>
    </source>
</reference>
<reference key="5">
    <citation type="journal article" date="2004" name="Plant Mol. Biol.">
        <title>Identification of a novel plant MAR DNA binding protein localized on chromosomal surfaces.</title>
        <authorList>
            <person name="Fujimoto S."/>
            <person name="Matsunaga S."/>
            <person name="Yonemura M."/>
            <person name="Uchiyama S."/>
            <person name="Azuma T."/>
            <person name="Fukui K."/>
        </authorList>
    </citation>
    <scope>IDENTIFICATION</scope>
    <scope>GENE FAMILY</scope>
    <scope>NOMENCLATURE</scope>
    <source>
        <strain>cv. Columbia</strain>
    </source>
</reference>
<reference key="6">
    <citation type="journal article" date="2008" name="J. Proteome Res.">
        <title>Site-specific phosphorylation profiling of Arabidopsis proteins by mass spectrometry and peptide chip analysis.</title>
        <authorList>
            <person name="de la Fuente van Bentem S."/>
            <person name="Anrather D."/>
            <person name="Dohnal I."/>
            <person name="Roitinger E."/>
            <person name="Csaszar E."/>
            <person name="Joore J."/>
            <person name="Buijnink J."/>
            <person name="Carreri A."/>
            <person name="Forzani C."/>
            <person name="Lorkovic Z.J."/>
            <person name="Barta A."/>
            <person name="Lecourieux D."/>
            <person name="Verhounig A."/>
            <person name="Jonak C."/>
            <person name="Hirt H."/>
        </authorList>
    </citation>
    <scope>IDENTIFICATION BY MASS SPECTROMETRY [LARGE SCALE ANALYSIS]</scope>
    <source>
        <tissue>Root</tissue>
    </source>
</reference>
<reference key="7">
    <citation type="journal article" date="2009" name="Plant Physiol.">
        <title>Large-scale Arabidopsis phosphoproteome profiling reveals novel chloroplast kinase substrates and phosphorylation networks.</title>
        <authorList>
            <person name="Reiland S."/>
            <person name="Messerli G."/>
            <person name="Baerenfaller K."/>
            <person name="Gerrits B."/>
            <person name="Endler A."/>
            <person name="Grossmann J."/>
            <person name="Gruissem W."/>
            <person name="Baginsky S."/>
        </authorList>
    </citation>
    <scope>IDENTIFICATION BY MASS SPECTROMETRY [LARGE SCALE ANALYSIS]</scope>
</reference>
<reference key="8">
    <citation type="journal article" date="2013" name="Proc. Natl. Acad. Sci. U.S.A.">
        <title>Arabidopsis thaliana AHL family modulates hypocotyl growth redundantly by interacting with each other via the PPC/DUF296 domain.</title>
        <authorList>
            <person name="Zhao J."/>
            <person name="Favero D.S."/>
            <person name="Peng H."/>
            <person name="Neff M.M."/>
        </authorList>
    </citation>
    <scope>GENE FAMILY</scope>
    <scope>DOMAIN PPC</scope>
</reference>
<comment type="function">
    <text evidence="1">Transcription factor that specifically binds AT-rich DNA sequences related to the nuclear matrix attachment regions (MARs).</text>
</comment>
<comment type="subcellular location">
    <subcellularLocation>
        <location evidence="1">Nucleus</location>
    </subcellularLocation>
</comment>
<comment type="domain">
    <text evidence="5">The PPC domain mediates interactions between AHL proteins.</text>
</comment>
<evidence type="ECO:0000250" key="1">
    <source>
        <dbReference type="UniProtKB" id="Q8VYJ2"/>
    </source>
</evidence>
<evidence type="ECO:0000255" key="2"/>
<evidence type="ECO:0000255" key="3">
    <source>
        <dbReference type="PROSITE-ProRule" id="PRU01078"/>
    </source>
</evidence>
<evidence type="ECO:0000256" key="4">
    <source>
        <dbReference type="SAM" id="MobiDB-lite"/>
    </source>
</evidence>
<evidence type="ECO:0000269" key="5">
    <source>
    </source>
</evidence>
<evidence type="ECO:0000303" key="6">
    <source>
    </source>
</evidence>
<evidence type="ECO:0000303" key="7">
    <source ref="1"/>
</evidence>
<evidence type="ECO:0000305" key="8"/>
<evidence type="ECO:0000312" key="9">
    <source>
        <dbReference type="Araport" id="AT2G33620"/>
    </source>
</evidence>
<evidence type="ECO:0000312" key="10">
    <source>
        <dbReference type="EMBL" id="AAB80677.2"/>
    </source>
</evidence>
<evidence type="ECO:0000312" key="11">
    <source>
        <dbReference type="EMBL" id="CAA10857.1"/>
    </source>
</evidence>
<evidence type="ECO:0000312" key="12">
    <source>
        <dbReference type="EMBL" id="FAA00281.1"/>
    </source>
</evidence>
<keyword id="KW-0238">DNA-binding</keyword>
<keyword id="KW-0539">Nucleus</keyword>
<keyword id="KW-1185">Reference proteome</keyword>
<keyword id="KW-0677">Repeat</keyword>
<keyword id="KW-0804">Transcription</keyword>
<keyword id="KW-0805">Transcription regulation</keyword>